<feature type="chain" id="PRO_1000116951" description="Phosphoadenosine 5'-phosphosulfate reductase">
    <location>
        <begin position="1"/>
        <end position="244"/>
    </location>
</feature>
<feature type="active site" description="Nucleophile; cysteine thiosulfonate intermediate" evidence="1">
    <location>
        <position position="239"/>
    </location>
</feature>
<reference key="1">
    <citation type="journal article" date="2009" name="PLoS Genet.">
        <title>Organised genome dynamics in the Escherichia coli species results in highly diverse adaptive paths.</title>
        <authorList>
            <person name="Touchon M."/>
            <person name="Hoede C."/>
            <person name="Tenaillon O."/>
            <person name="Barbe V."/>
            <person name="Baeriswyl S."/>
            <person name="Bidet P."/>
            <person name="Bingen E."/>
            <person name="Bonacorsi S."/>
            <person name="Bouchier C."/>
            <person name="Bouvet O."/>
            <person name="Calteau A."/>
            <person name="Chiapello H."/>
            <person name="Clermont O."/>
            <person name="Cruveiller S."/>
            <person name="Danchin A."/>
            <person name="Diard M."/>
            <person name="Dossat C."/>
            <person name="Karoui M.E."/>
            <person name="Frapy E."/>
            <person name="Garry L."/>
            <person name="Ghigo J.M."/>
            <person name="Gilles A.M."/>
            <person name="Johnson J."/>
            <person name="Le Bouguenec C."/>
            <person name="Lescat M."/>
            <person name="Mangenot S."/>
            <person name="Martinez-Jehanne V."/>
            <person name="Matic I."/>
            <person name="Nassif X."/>
            <person name="Oztas S."/>
            <person name="Petit M.A."/>
            <person name="Pichon C."/>
            <person name="Rouy Z."/>
            <person name="Ruf C.S."/>
            <person name="Schneider D."/>
            <person name="Tourret J."/>
            <person name="Vacherie B."/>
            <person name="Vallenet D."/>
            <person name="Medigue C."/>
            <person name="Rocha E.P.C."/>
            <person name="Denamur E."/>
        </authorList>
    </citation>
    <scope>NUCLEOTIDE SEQUENCE [LARGE SCALE GENOMIC DNA]</scope>
    <source>
        <strain>UMN026 / ExPEC</strain>
    </source>
</reference>
<organism>
    <name type="scientific">Escherichia coli O17:K52:H18 (strain UMN026 / ExPEC)</name>
    <dbReference type="NCBI Taxonomy" id="585056"/>
    <lineage>
        <taxon>Bacteria</taxon>
        <taxon>Pseudomonadati</taxon>
        <taxon>Pseudomonadota</taxon>
        <taxon>Gammaproteobacteria</taxon>
        <taxon>Enterobacterales</taxon>
        <taxon>Enterobacteriaceae</taxon>
        <taxon>Escherichia</taxon>
    </lineage>
</organism>
<protein>
    <recommendedName>
        <fullName evidence="1">Phosphoadenosine 5'-phosphosulfate reductase</fullName>
        <shortName evidence="1">PAPS reductase</shortName>
        <ecNumber evidence="1">1.8.4.8</ecNumber>
    </recommendedName>
    <alternativeName>
        <fullName evidence="1">3'-phosphoadenylylsulfate reductase</fullName>
    </alternativeName>
    <alternativeName>
        <fullName evidence="1">PAPS reductase, thioredoxin dependent</fullName>
    </alternativeName>
    <alternativeName>
        <fullName evidence="1">PAPS sulfotransferase</fullName>
    </alternativeName>
    <alternativeName>
        <fullName evidence="1">PAdoPS reductase</fullName>
    </alternativeName>
</protein>
<dbReference type="EC" id="1.8.4.8" evidence="1"/>
<dbReference type="EMBL" id="CU928163">
    <property type="protein sequence ID" value="CAR14257.1"/>
    <property type="molecule type" value="Genomic_DNA"/>
</dbReference>
<dbReference type="RefSeq" id="WP_000039850.1">
    <property type="nucleotide sequence ID" value="NC_011751.1"/>
</dbReference>
<dbReference type="RefSeq" id="YP_002413777.1">
    <property type="nucleotide sequence ID" value="NC_011751.1"/>
</dbReference>
<dbReference type="SMR" id="B7N6Z6"/>
<dbReference type="STRING" id="585056.ECUMN_3090"/>
<dbReference type="GeneID" id="75058622"/>
<dbReference type="KEGG" id="eum:ECUMN_3090"/>
<dbReference type="PATRIC" id="fig|585056.7.peg.3267"/>
<dbReference type="HOGENOM" id="CLU_044089_3_0_6"/>
<dbReference type="UniPathway" id="UPA00140">
    <property type="reaction ID" value="UER00206"/>
</dbReference>
<dbReference type="Proteomes" id="UP000007097">
    <property type="component" value="Chromosome"/>
</dbReference>
<dbReference type="GO" id="GO:0005737">
    <property type="term" value="C:cytoplasm"/>
    <property type="evidence" value="ECO:0007669"/>
    <property type="project" value="UniProtKB-SubCell"/>
</dbReference>
<dbReference type="GO" id="GO:0004604">
    <property type="term" value="F:phosphoadenylyl-sulfate reductase (thioredoxin) activity"/>
    <property type="evidence" value="ECO:0007669"/>
    <property type="project" value="UniProtKB-UniRule"/>
</dbReference>
<dbReference type="GO" id="GO:0070814">
    <property type="term" value="P:hydrogen sulfide biosynthetic process"/>
    <property type="evidence" value="ECO:0007669"/>
    <property type="project" value="UniProtKB-UniRule"/>
</dbReference>
<dbReference type="GO" id="GO:0019379">
    <property type="term" value="P:sulfate assimilation, phosphoadenylyl sulfate reduction by phosphoadenylyl-sulfate reductase (thioredoxin)"/>
    <property type="evidence" value="ECO:0007669"/>
    <property type="project" value="UniProtKB-UniRule"/>
</dbReference>
<dbReference type="CDD" id="cd23945">
    <property type="entry name" value="PAPS_reductase"/>
    <property type="match status" value="1"/>
</dbReference>
<dbReference type="FunFam" id="3.40.50.620:FF:000043">
    <property type="entry name" value="Phosphoadenosine phosphosulfate reductase"/>
    <property type="match status" value="1"/>
</dbReference>
<dbReference type="Gene3D" id="3.40.50.620">
    <property type="entry name" value="HUPs"/>
    <property type="match status" value="1"/>
</dbReference>
<dbReference type="HAMAP" id="MF_00063">
    <property type="entry name" value="CysH"/>
    <property type="match status" value="1"/>
</dbReference>
<dbReference type="InterPro" id="IPR004511">
    <property type="entry name" value="PAPS/APS_Rdtase"/>
</dbReference>
<dbReference type="InterPro" id="IPR002500">
    <property type="entry name" value="PAPS_reduct_dom"/>
</dbReference>
<dbReference type="InterPro" id="IPR011800">
    <property type="entry name" value="PAPS_reductase_CysH"/>
</dbReference>
<dbReference type="InterPro" id="IPR014729">
    <property type="entry name" value="Rossmann-like_a/b/a_fold"/>
</dbReference>
<dbReference type="NCBIfam" id="TIGR00434">
    <property type="entry name" value="cysH"/>
    <property type="match status" value="1"/>
</dbReference>
<dbReference type="NCBIfam" id="TIGR02057">
    <property type="entry name" value="PAPS_reductase"/>
    <property type="match status" value="1"/>
</dbReference>
<dbReference type="NCBIfam" id="NF002537">
    <property type="entry name" value="PRK02090.1"/>
    <property type="match status" value="1"/>
</dbReference>
<dbReference type="PANTHER" id="PTHR46509">
    <property type="entry name" value="PHOSPHOADENOSINE PHOSPHOSULFATE REDUCTASE"/>
    <property type="match status" value="1"/>
</dbReference>
<dbReference type="PANTHER" id="PTHR46509:SF1">
    <property type="entry name" value="PHOSPHOADENOSINE PHOSPHOSULFATE REDUCTASE"/>
    <property type="match status" value="1"/>
</dbReference>
<dbReference type="Pfam" id="PF01507">
    <property type="entry name" value="PAPS_reduct"/>
    <property type="match status" value="1"/>
</dbReference>
<dbReference type="PIRSF" id="PIRSF000857">
    <property type="entry name" value="PAPS_reductase"/>
    <property type="match status" value="1"/>
</dbReference>
<dbReference type="SUPFAM" id="SSF52402">
    <property type="entry name" value="Adenine nucleotide alpha hydrolases-like"/>
    <property type="match status" value="1"/>
</dbReference>
<accession>B7N6Z6</accession>
<proteinExistence type="inferred from homology"/>
<sequence>MSKLDLNALNELPKVDRILALAETNAELEKLDAEGRVAWALDNLPGEYVLSSSFGIQAAVSLHLVNQIRPDIPVILTDTGYLFPETYRFIDELTDKLKLNLKVYRATESAAWQEARYGKLWEQGVEGIEKYNDINKVEPMNRALKELNAQTWFAGLRREQSGSRANLPVLAIQRGVFKVLPIIDWDNRTIYQYLQKHGLKYHPLWDEGYLSVGDTHTTRKWEPGMAEEETRFFGLKRECGLHEG</sequence>
<evidence type="ECO:0000255" key="1">
    <source>
        <dbReference type="HAMAP-Rule" id="MF_00063"/>
    </source>
</evidence>
<comment type="function">
    <text evidence="1">Catalyzes the formation of sulfite from phosphoadenosine 5'-phosphosulfate (PAPS) using thioredoxin as an electron donor.</text>
</comment>
<comment type="catalytic activity">
    <reaction evidence="1">
        <text>[thioredoxin]-disulfide + sulfite + adenosine 3',5'-bisphosphate + 2 H(+) = [thioredoxin]-dithiol + 3'-phosphoadenylyl sulfate</text>
        <dbReference type="Rhea" id="RHEA:11724"/>
        <dbReference type="Rhea" id="RHEA-COMP:10698"/>
        <dbReference type="Rhea" id="RHEA-COMP:10700"/>
        <dbReference type="ChEBI" id="CHEBI:15378"/>
        <dbReference type="ChEBI" id="CHEBI:17359"/>
        <dbReference type="ChEBI" id="CHEBI:29950"/>
        <dbReference type="ChEBI" id="CHEBI:50058"/>
        <dbReference type="ChEBI" id="CHEBI:58339"/>
        <dbReference type="ChEBI" id="CHEBI:58343"/>
        <dbReference type="EC" id="1.8.4.8"/>
    </reaction>
</comment>
<comment type="pathway">
    <text evidence="1">Sulfur metabolism; hydrogen sulfide biosynthesis; sulfite from sulfate: step 3/3.</text>
</comment>
<comment type="subcellular location">
    <subcellularLocation>
        <location evidence="1">Cytoplasm</location>
    </subcellularLocation>
</comment>
<comment type="similarity">
    <text evidence="1">Belongs to the PAPS reductase family. CysH subfamily.</text>
</comment>
<name>CYSH_ECOLU</name>
<gene>
    <name evidence="1" type="primary">cysH</name>
    <name type="ordered locus">ECUMN_3090</name>
</gene>
<keyword id="KW-0963">Cytoplasm</keyword>
<keyword id="KW-0560">Oxidoreductase</keyword>